<reference key="1">
    <citation type="submission" date="1998-03" db="EMBL/GenBank/DDBJ databases">
        <title>Calreticulin from Berberis stolonifera.</title>
        <authorList>
            <person name="Chou W.-M."/>
            <person name="Kutchan T.M."/>
        </authorList>
    </citation>
    <scope>NUCLEOTIDE SEQUENCE [MRNA]</scope>
</reference>
<dbReference type="EMBL" id="AF052040">
    <property type="protein sequence ID" value="AAD17490.1"/>
    <property type="molecule type" value="mRNA"/>
</dbReference>
<dbReference type="SMR" id="Q9ZPP1"/>
<dbReference type="GO" id="GO:0005788">
    <property type="term" value="C:endoplasmic reticulum lumen"/>
    <property type="evidence" value="ECO:0007669"/>
    <property type="project" value="UniProtKB-SubCell"/>
</dbReference>
<dbReference type="GO" id="GO:0005789">
    <property type="term" value="C:endoplasmic reticulum membrane"/>
    <property type="evidence" value="ECO:0007669"/>
    <property type="project" value="TreeGrafter"/>
</dbReference>
<dbReference type="GO" id="GO:0005509">
    <property type="term" value="F:calcium ion binding"/>
    <property type="evidence" value="ECO:0007669"/>
    <property type="project" value="InterPro"/>
</dbReference>
<dbReference type="GO" id="GO:0030246">
    <property type="term" value="F:carbohydrate binding"/>
    <property type="evidence" value="ECO:0007669"/>
    <property type="project" value="UniProtKB-KW"/>
</dbReference>
<dbReference type="GO" id="GO:0051082">
    <property type="term" value="F:unfolded protein binding"/>
    <property type="evidence" value="ECO:0007669"/>
    <property type="project" value="InterPro"/>
</dbReference>
<dbReference type="GO" id="GO:0036503">
    <property type="term" value="P:ERAD pathway"/>
    <property type="evidence" value="ECO:0007669"/>
    <property type="project" value="TreeGrafter"/>
</dbReference>
<dbReference type="GO" id="GO:0006457">
    <property type="term" value="P:protein folding"/>
    <property type="evidence" value="ECO:0007669"/>
    <property type="project" value="InterPro"/>
</dbReference>
<dbReference type="FunFam" id="2.10.250.10:FF:000002">
    <property type="entry name" value="Calreticulin"/>
    <property type="match status" value="1"/>
</dbReference>
<dbReference type="FunFam" id="2.60.120.200:FF:000018">
    <property type="entry name" value="Calreticulin 1b"/>
    <property type="match status" value="1"/>
</dbReference>
<dbReference type="FunFam" id="2.60.120.200:FF:000339">
    <property type="entry name" value="Calreticulin 3"/>
    <property type="match status" value="1"/>
</dbReference>
<dbReference type="Gene3D" id="2.60.120.200">
    <property type="match status" value="1"/>
</dbReference>
<dbReference type="Gene3D" id="2.10.250.10">
    <property type="entry name" value="Calreticulin/calnexin, P domain"/>
    <property type="match status" value="1"/>
</dbReference>
<dbReference type="InterPro" id="IPR001580">
    <property type="entry name" value="Calret/calnex"/>
</dbReference>
<dbReference type="InterPro" id="IPR018124">
    <property type="entry name" value="Calret/calnex_CS"/>
</dbReference>
<dbReference type="InterPro" id="IPR009169">
    <property type="entry name" value="Calreticulin"/>
</dbReference>
<dbReference type="InterPro" id="IPR009033">
    <property type="entry name" value="Calreticulin/calnexin_P_dom_sf"/>
</dbReference>
<dbReference type="InterPro" id="IPR013320">
    <property type="entry name" value="ConA-like_dom_sf"/>
</dbReference>
<dbReference type="PANTHER" id="PTHR11073:SF2">
    <property type="entry name" value="CALRETICULIN"/>
    <property type="match status" value="1"/>
</dbReference>
<dbReference type="PANTHER" id="PTHR11073">
    <property type="entry name" value="CALRETICULIN AND CALNEXIN"/>
    <property type="match status" value="1"/>
</dbReference>
<dbReference type="Pfam" id="PF00262">
    <property type="entry name" value="Calreticulin"/>
    <property type="match status" value="2"/>
</dbReference>
<dbReference type="PIRSF" id="PIRSF002356">
    <property type="entry name" value="Calreticulin"/>
    <property type="match status" value="1"/>
</dbReference>
<dbReference type="PRINTS" id="PR00626">
    <property type="entry name" value="CALRETICULIN"/>
</dbReference>
<dbReference type="SUPFAM" id="SSF49899">
    <property type="entry name" value="Concanavalin A-like lectins/glucanases"/>
    <property type="match status" value="1"/>
</dbReference>
<dbReference type="SUPFAM" id="SSF63887">
    <property type="entry name" value="P-domain of calnexin/calreticulin"/>
    <property type="match status" value="1"/>
</dbReference>
<dbReference type="PROSITE" id="PS00803">
    <property type="entry name" value="CALRETICULIN_1"/>
    <property type="match status" value="1"/>
</dbReference>
<dbReference type="PROSITE" id="PS00804">
    <property type="entry name" value="CALRETICULIN_2"/>
    <property type="match status" value="1"/>
</dbReference>
<dbReference type="PROSITE" id="PS00805">
    <property type="entry name" value="CALRETICULIN_REPEAT"/>
    <property type="match status" value="2"/>
</dbReference>
<dbReference type="PROSITE" id="PS00014">
    <property type="entry name" value="ER_TARGET"/>
    <property type="match status" value="1"/>
</dbReference>
<accession>Q9ZPP1</accession>
<name>CALR_BERST</name>
<comment type="function">
    <text evidence="1">Molecular calcium-binding chaperone promoting folding, oligomeric assembly and quality control in the ER via the calreticulin/calnexin cycle. This lectin may interact transiently with almost all of the monoglucosylated glycoproteins that are synthesized in the ER (By similarity).</text>
</comment>
<comment type="subcellular location">
    <subcellularLocation>
        <location evidence="4">Endoplasmic reticulum lumen</location>
    </subcellularLocation>
</comment>
<comment type="domain">
    <text evidence="1">Can be divided into a N-terminal globular domain, a proline-rich P-domain forming an elongated arm-like structure and a C-terminal acidic domain. The P-domain binds one molecule of calcium with high affinity, whereas the acidic C-domain binds multiple calcium ions with low affinity (By similarity).</text>
</comment>
<comment type="domain">
    <text evidence="1">The interaction with glycans occurs through a binding site in the globular lectin domain.</text>
</comment>
<comment type="domain">
    <text evidence="1">The zinc binding sites are localized to the N-domain.</text>
</comment>
<comment type="similarity">
    <text evidence="6">Belongs to the calreticulin family.</text>
</comment>
<organism>
    <name type="scientific">Berberis stolonifera</name>
    <name type="common">Barberry</name>
    <dbReference type="NCBI Taxonomy" id="33814"/>
    <lineage>
        <taxon>Eukaryota</taxon>
        <taxon>Viridiplantae</taxon>
        <taxon>Streptophyta</taxon>
        <taxon>Embryophyta</taxon>
        <taxon>Tracheophyta</taxon>
        <taxon>Spermatophyta</taxon>
        <taxon>Magnoliopsida</taxon>
        <taxon>Ranunculales</taxon>
        <taxon>Berberidaceae</taxon>
        <taxon>Berberidoideae</taxon>
        <taxon>Berberideae</taxon>
        <taxon>Berberis</taxon>
    </lineage>
</organism>
<sequence length="416" mass="47927">MAIAERRSRSHLALRVRDRVSAEVFFEERFEDGWESKWVKSDWKRDENMAGEWNFTSGKWNGDANDKGIQTSEDYRFYAISAAFPEFSNKGKTLVFQFSVKHEQKLDCGGGYMKLLSGDVDQKKFGGDTPYSIMFGPDICGYSTKKVHAILTKGETNHLIKKDVPCETDQLTHVYTFILRPDASYSILIDNVEKQSGSVYTDWDILPPKQIKDPEAKKPEDWEDKEYIPDPEDKKPEGYDDIPKEITDPEAKKPEDWDDEEDGEWTAPTIPNPDYKGEWKPKKIKNPNFKGKWKAPMIDNPDFKDDPDIYVFPKLKYVGIELWQVKSGTMFDNVLICDDPDYAKKLAEETWGKNKDAEKAAFDEAEKKKEEEEAKDDPTESDDEKPDEEGESDGEGDDESKDIDNEEDDEDVHDEL</sequence>
<evidence type="ECO:0000250" key="1"/>
<evidence type="ECO:0000250" key="2">
    <source>
        <dbReference type="UniProtKB" id="P14211"/>
    </source>
</evidence>
<evidence type="ECO:0000255" key="3"/>
<evidence type="ECO:0000255" key="4">
    <source>
        <dbReference type="PROSITE-ProRule" id="PRU10138"/>
    </source>
</evidence>
<evidence type="ECO:0000256" key="5">
    <source>
        <dbReference type="SAM" id="MobiDB-lite"/>
    </source>
</evidence>
<evidence type="ECO:0000305" key="6"/>
<keyword id="KW-0106">Calcium</keyword>
<keyword id="KW-0143">Chaperone</keyword>
<keyword id="KW-1015">Disulfide bond</keyword>
<keyword id="KW-0256">Endoplasmic reticulum</keyword>
<keyword id="KW-0325">Glycoprotein</keyword>
<keyword id="KW-0430">Lectin</keyword>
<keyword id="KW-0479">Metal-binding</keyword>
<keyword id="KW-0677">Repeat</keyword>
<keyword id="KW-0732">Signal</keyword>
<keyword id="KW-0862">Zinc</keyword>
<feature type="signal peptide" evidence="3">
    <location>
        <begin position="1"/>
        <end status="unknown"/>
    </location>
</feature>
<feature type="chain" id="PRO_0000004187" description="Calreticulin">
    <location>
        <begin status="unknown"/>
        <end position="416"/>
    </location>
</feature>
<feature type="repeat" description="1-1">
    <location>
        <begin position="194"/>
        <end position="205"/>
    </location>
</feature>
<feature type="repeat" description="1-2">
    <location>
        <begin position="213"/>
        <end position="224"/>
    </location>
</feature>
<feature type="repeat" description="1-3">
    <location>
        <begin position="230"/>
        <end position="241"/>
    </location>
</feature>
<feature type="repeat" description="1-4">
    <location>
        <begin position="248"/>
        <end position="259"/>
    </location>
</feature>
<feature type="repeat" description="2-1">
    <location>
        <begin position="263"/>
        <end position="273"/>
    </location>
</feature>
<feature type="repeat" description="2-2">
    <location>
        <begin position="277"/>
        <end position="287"/>
    </location>
</feature>
<feature type="repeat" description="2-3">
    <location>
        <begin position="291"/>
        <end position="301"/>
    </location>
</feature>
<feature type="region of interest" description="4 X approximate repeats">
    <location>
        <begin position="194"/>
        <end position="259"/>
    </location>
</feature>
<feature type="region of interest" description="Disordered" evidence="5">
    <location>
        <begin position="209"/>
        <end position="281"/>
    </location>
</feature>
<feature type="region of interest" description="3 X approximate repeats">
    <location>
        <begin position="263"/>
        <end position="301"/>
    </location>
</feature>
<feature type="region of interest" description="Disordered" evidence="5">
    <location>
        <begin position="349"/>
        <end position="416"/>
    </location>
</feature>
<feature type="short sequence motif" description="Prevents secretion from ER" evidence="4">
    <location>
        <begin position="413"/>
        <end position="416"/>
    </location>
</feature>
<feature type="compositionally biased region" description="Basic and acidic residues" evidence="5">
    <location>
        <begin position="210"/>
        <end position="255"/>
    </location>
</feature>
<feature type="compositionally biased region" description="Basic and acidic residues" evidence="5">
    <location>
        <begin position="349"/>
        <end position="378"/>
    </location>
</feature>
<feature type="compositionally biased region" description="Acidic residues" evidence="5">
    <location>
        <begin position="379"/>
        <end position="416"/>
    </location>
</feature>
<feature type="binding site" evidence="2">
    <location>
        <position position="112"/>
    </location>
    <ligand>
        <name>an alpha-D-glucoside</name>
        <dbReference type="ChEBI" id="CHEBI:22390"/>
    </ligand>
</feature>
<feature type="binding site" evidence="2">
    <location>
        <position position="114"/>
    </location>
    <ligand>
        <name>an alpha-D-glucoside</name>
        <dbReference type="ChEBI" id="CHEBI:22390"/>
    </ligand>
</feature>
<feature type="binding site" evidence="2">
    <location>
        <position position="131"/>
    </location>
    <ligand>
        <name>an alpha-D-glucoside</name>
        <dbReference type="ChEBI" id="CHEBI:22390"/>
    </ligand>
</feature>
<feature type="binding site" evidence="2">
    <location>
        <position position="138"/>
    </location>
    <ligand>
        <name>an alpha-D-glucoside</name>
        <dbReference type="ChEBI" id="CHEBI:22390"/>
    </ligand>
</feature>
<feature type="binding site" evidence="2">
    <location>
        <position position="321"/>
    </location>
    <ligand>
        <name>an alpha-D-glucoside</name>
        <dbReference type="ChEBI" id="CHEBI:22390"/>
    </ligand>
</feature>
<feature type="glycosylation site" description="N-linked (GlcNAc...) asparagine" evidence="3">
    <location>
        <position position="54"/>
    </location>
</feature>
<feature type="disulfide bond" evidence="1">
    <location>
        <begin position="108"/>
        <end position="140"/>
    </location>
</feature>
<protein>
    <recommendedName>
        <fullName>Calreticulin</fullName>
    </recommendedName>
</protein>
<proteinExistence type="evidence at transcript level"/>